<feature type="chain" id="PRO_1000084765" description="tRNA pseudouridine synthase D">
    <location>
        <begin position="1"/>
        <end position="348"/>
    </location>
</feature>
<feature type="domain" description="TRUD" evidence="1">
    <location>
        <begin position="154"/>
        <end position="302"/>
    </location>
</feature>
<feature type="active site" description="Nucleophile" evidence="1">
    <location>
        <position position="79"/>
    </location>
</feature>
<feature type="binding site" evidence="1">
    <location>
        <position position="26"/>
    </location>
    <ligand>
        <name>substrate</name>
    </ligand>
</feature>
<feature type="binding site" evidence="1">
    <location>
        <position position="128"/>
    </location>
    <ligand>
        <name>substrate</name>
    </ligand>
</feature>
<feature type="binding site" evidence="1">
    <location>
        <position position="328"/>
    </location>
    <ligand>
        <name>substrate</name>
    </ligand>
</feature>
<sequence>MDMANLTWLHGQPQSTGVLKANPEDFVVVEDLGFEPDGEGEHVLVNIRKNGCNTQFVADYLARFAGIHARSVSYAGLKDRHAVTEQWFCLHLPGKETPDFTQFSLEGCEVLASARHLRKMRIGTLKGNAFTLVLRHISDRQDVEPRLQAIATGGVPNYFGSQRFGRGGNNLVMARRWANDEIRVKERSKRSFYLSASRSALFNLIASRRLANQQQHTVLEGDALQLSGRGSWFVAKPEELEALQQRLDAGELMITAPLPGDGEPGTAGEALSFEQQCLLEQPELMALLKRERVDPARRALLLQPKNMHWEWWDDATVELRFWLPAGSFATSVVREIMRQDSSDADISE</sequence>
<proteinExistence type="inferred from homology"/>
<organism>
    <name type="scientific">Serratia proteamaculans (strain 568)</name>
    <dbReference type="NCBI Taxonomy" id="399741"/>
    <lineage>
        <taxon>Bacteria</taxon>
        <taxon>Pseudomonadati</taxon>
        <taxon>Pseudomonadota</taxon>
        <taxon>Gammaproteobacteria</taxon>
        <taxon>Enterobacterales</taxon>
        <taxon>Yersiniaceae</taxon>
        <taxon>Serratia</taxon>
    </lineage>
</organism>
<gene>
    <name evidence="1" type="primary">truD</name>
    <name type="ordered locus">Spro_0828</name>
</gene>
<protein>
    <recommendedName>
        <fullName evidence="1">tRNA pseudouridine synthase D</fullName>
        <ecNumber evidence="1">5.4.99.27</ecNumber>
    </recommendedName>
    <alternativeName>
        <fullName evidence="1">tRNA pseudouridine(13) synthase</fullName>
    </alternativeName>
    <alternativeName>
        <fullName evidence="1">tRNA pseudouridylate synthase D</fullName>
    </alternativeName>
    <alternativeName>
        <fullName evidence="1">tRNA-uridine isomerase D</fullName>
    </alternativeName>
</protein>
<name>TRUD_SERP5</name>
<keyword id="KW-0413">Isomerase</keyword>
<keyword id="KW-0819">tRNA processing</keyword>
<comment type="function">
    <text evidence="1">Responsible for synthesis of pseudouridine from uracil-13 in transfer RNAs.</text>
</comment>
<comment type="catalytic activity">
    <reaction evidence="1">
        <text>uridine(13) in tRNA = pseudouridine(13) in tRNA</text>
        <dbReference type="Rhea" id="RHEA:42540"/>
        <dbReference type="Rhea" id="RHEA-COMP:10105"/>
        <dbReference type="Rhea" id="RHEA-COMP:10106"/>
        <dbReference type="ChEBI" id="CHEBI:65314"/>
        <dbReference type="ChEBI" id="CHEBI:65315"/>
        <dbReference type="EC" id="5.4.99.27"/>
    </reaction>
</comment>
<comment type="similarity">
    <text evidence="1">Belongs to the pseudouridine synthase TruD family.</text>
</comment>
<reference key="1">
    <citation type="submission" date="2007-09" db="EMBL/GenBank/DDBJ databases">
        <title>Complete sequence of chromosome of Serratia proteamaculans 568.</title>
        <authorList>
            <consortium name="US DOE Joint Genome Institute"/>
            <person name="Copeland A."/>
            <person name="Lucas S."/>
            <person name="Lapidus A."/>
            <person name="Barry K."/>
            <person name="Glavina del Rio T."/>
            <person name="Dalin E."/>
            <person name="Tice H."/>
            <person name="Pitluck S."/>
            <person name="Chain P."/>
            <person name="Malfatti S."/>
            <person name="Shin M."/>
            <person name="Vergez L."/>
            <person name="Schmutz J."/>
            <person name="Larimer F."/>
            <person name="Land M."/>
            <person name="Hauser L."/>
            <person name="Kyrpides N."/>
            <person name="Kim E."/>
            <person name="Taghavi S."/>
            <person name="Newman L."/>
            <person name="Vangronsveld J."/>
            <person name="van der Lelie D."/>
            <person name="Richardson P."/>
        </authorList>
    </citation>
    <scope>NUCLEOTIDE SEQUENCE [LARGE SCALE GENOMIC DNA]</scope>
    <source>
        <strain>568</strain>
    </source>
</reference>
<evidence type="ECO:0000255" key="1">
    <source>
        <dbReference type="HAMAP-Rule" id="MF_01082"/>
    </source>
</evidence>
<dbReference type="EC" id="5.4.99.27" evidence="1"/>
<dbReference type="EMBL" id="CP000826">
    <property type="protein sequence ID" value="ABV39934.1"/>
    <property type="molecule type" value="Genomic_DNA"/>
</dbReference>
<dbReference type="SMR" id="A8G9Z4"/>
<dbReference type="STRING" id="399741.Spro_0828"/>
<dbReference type="KEGG" id="spe:Spro_0828"/>
<dbReference type="eggNOG" id="COG0585">
    <property type="taxonomic scope" value="Bacteria"/>
</dbReference>
<dbReference type="HOGENOM" id="CLU_005281_4_0_6"/>
<dbReference type="OrthoDB" id="1550679at2"/>
<dbReference type="GO" id="GO:0005829">
    <property type="term" value="C:cytosol"/>
    <property type="evidence" value="ECO:0007669"/>
    <property type="project" value="TreeGrafter"/>
</dbReference>
<dbReference type="GO" id="GO:0003723">
    <property type="term" value="F:RNA binding"/>
    <property type="evidence" value="ECO:0007669"/>
    <property type="project" value="InterPro"/>
</dbReference>
<dbReference type="GO" id="GO:0160150">
    <property type="term" value="F:tRNA pseudouridine(13) synthase activity"/>
    <property type="evidence" value="ECO:0007669"/>
    <property type="project" value="UniProtKB-EC"/>
</dbReference>
<dbReference type="GO" id="GO:0031119">
    <property type="term" value="P:tRNA pseudouridine synthesis"/>
    <property type="evidence" value="ECO:0007669"/>
    <property type="project" value="UniProtKB-UniRule"/>
</dbReference>
<dbReference type="CDD" id="cd02575">
    <property type="entry name" value="PseudoU_synth_EcTruD"/>
    <property type="match status" value="1"/>
</dbReference>
<dbReference type="FunFam" id="3.30.2340.10:FF:000001">
    <property type="entry name" value="tRNA pseudouridine synthase D"/>
    <property type="match status" value="1"/>
</dbReference>
<dbReference type="FunFam" id="3.30.2350.20:FF:000001">
    <property type="entry name" value="tRNA pseudouridine synthase D"/>
    <property type="match status" value="1"/>
</dbReference>
<dbReference type="Gene3D" id="3.30.2350.20">
    <property type="entry name" value="TruD, catalytic domain"/>
    <property type="match status" value="1"/>
</dbReference>
<dbReference type="Gene3D" id="3.30.2340.10">
    <property type="entry name" value="TruD, insertion domain"/>
    <property type="match status" value="1"/>
</dbReference>
<dbReference type="HAMAP" id="MF_01082">
    <property type="entry name" value="TruD"/>
    <property type="match status" value="1"/>
</dbReference>
<dbReference type="InterPro" id="IPR020103">
    <property type="entry name" value="PsdUridine_synth_cat_dom_sf"/>
</dbReference>
<dbReference type="InterPro" id="IPR001656">
    <property type="entry name" value="PsdUridine_synth_TruD"/>
</dbReference>
<dbReference type="InterPro" id="IPR020119">
    <property type="entry name" value="PsdUridine_synth_TruD_CS"/>
</dbReference>
<dbReference type="InterPro" id="IPR011760">
    <property type="entry name" value="PsdUridine_synth_TruD_insert"/>
</dbReference>
<dbReference type="InterPro" id="IPR042214">
    <property type="entry name" value="TruD_catalytic"/>
</dbReference>
<dbReference type="InterPro" id="IPR043165">
    <property type="entry name" value="TruD_insert_sf"/>
</dbReference>
<dbReference type="InterPro" id="IPR050170">
    <property type="entry name" value="TruD_pseudoU_synthase"/>
</dbReference>
<dbReference type="NCBIfam" id="NF002155">
    <property type="entry name" value="PRK00984.1-4"/>
    <property type="match status" value="1"/>
</dbReference>
<dbReference type="NCBIfam" id="TIGR00094">
    <property type="entry name" value="tRNA_TruD_broad"/>
    <property type="match status" value="1"/>
</dbReference>
<dbReference type="PANTHER" id="PTHR47811">
    <property type="entry name" value="TRNA PSEUDOURIDINE SYNTHASE D"/>
    <property type="match status" value="1"/>
</dbReference>
<dbReference type="PANTHER" id="PTHR47811:SF1">
    <property type="entry name" value="TRNA PSEUDOURIDINE SYNTHASE D"/>
    <property type="match status" value="1"/>
</dbReference>
<dbReference type="Pfam" id="PF01142">
    <property type="entry name" value="TruD"/>
    <property type="match status" value="2"/>
</dbReference>
<dbReference type="SUPFAM" id="SSF55120">
    <property type="entry name" value="Pseudouridine synthase"/>
    <property type="match status" value="1"/>
</dbReference>
<dbReference type="PROSITE" id="PS50984">
    <property type="entry name" value="TRUD"/>
    <property type="match status" value="1"/>
</dbReference>
<dbReference type="PROSITE" id="PS01268">
    <property type="entry name" value="UPF0024"/>
    <property type="match status" value="1"/>
</dbReference>
<accession>A8G9Z4</accession>